<keyword id="KW-0030">Aminoacyl-tRNA synthetase</keyword>
<keyword id="KW-0067">ATP-binding</keyword>
<keyword id="KW-0963">Cytoplasm</keyword>
<keyword id="KW-0436">Ligase</keyword>
<keyword id="KW-0547">Nucleotide-binding</keyword>
<keyword id="KW-0648">Protein biosynthesis</keyword>
<comment type="function">
    <text evidence="1">Catalyzes the attachment of L-aspartate to tRNA(Asp) in a two-step reaction: L-aspartate is first activated by ATP to form Asp-AMP and then transferred to the acceptor end of tRNA(Asp).</text>
</comment>
<comment type="catalytic activity">
    <reaction evidence="1">
        <text>tRNA(Asp) + L-aspartate + ATP = L-aspartyl-tRNA(Asp) + AMP + diphosphate</text>
        <dbReference type="Rhea" id="RHEA:19649"/>
        <dbReference type="Rhea" id="RHEA-COMP:9660"/>
        <dbReference type="Rhea" id="RHEA-COMP:9678"/>
        <dbReference type="ChEBI" id="CHEBI:29991"/>
        <dbReference type="ChEBI" id="CHEBI:30616"/>
        <dbReference type="ChEBI" id="CHEBI:33019"/>
        <dbReference type="ChEBI" id="CHEBI:78442"/>
        <dbReference type="ChEBI" id="CHEBI:78516"/>
        <dbReference type="ChEBI" id="CHEBI:456215"/>
        <dbReference type="EC" id="6.1.1.12"/>
    </reaction>
</comment>
<comment type="subunit">
    <text evidence="1">Homodimer.</text>
</comment>
<comment type="subcellular location">
    <subcellularLocation>
        <location evidence="1">Cytoplasm</location>
    </subcellularLocation>
</comment>
<comment type="similarity">
    <text evidence="1">Belongs to the class-II aminoacyl-tRNA synthetase family. Type 1 subfamily.</text>
</comment>
<evidence type="ECO:0000255" key="1">
    <source>
        <dbReference type="HAMAP-Rule" id="MF_00044"/>
    </source>
</evidence>
<dbReference type="EC" id="6.1.1.12" evidence="1"/>
<dbReference type="EMBL" id="CP000444">
    <property type="protein sequence ID" value="ABI43068.1"/>
    <property type="molecule type" value="Genomic_DNA"/>
</dbReference>
<dbReference type="SMR" id="Q0HUY7"/>
<dbReference type="KEGG" id="shm:Shewmr7_2080"/>
<dbReference type="HOGENOM" id="CLU_014330_3_2_6"/>
<dbReference type="GO" id="GO:0005737">
    <property type="term" value="C:cytoplasm"/>
    <property type="evidence" value="ECO:0007669"/>
    <property type="project" value="UniProtKB-SubCell"/>
</dbReference>
<dbReference type="GO" id="GO:0004815">
    <property type="term" value="F:aspartate-tRNA ligase activity"/>
    <property type="evidence" value="ECO:0007669"/>
    <property type="project" value="UniProtKB-UniRule"/>
</dbReference>
<dbReference type="GO" id="GO:0005524">
    <property type="term" value="F:ATP binding"/>
    <property type="evidence" value="ECO:0007669"/>
    <property type="project" value="UniProtKB-UniRule"/>
</dbReference>
<dbReference type="GO" id="GO:0003676">
    <property type="term" value="F:nucleic acid binding"/>
    <property type="evidence" value="ECO:0007669"/>
    <property type="project" value="InterPro"/>
</dbReference>
<dbReference type="GO" id="GO:0006422">
    <property type="term" value="P:aspartyl-tRNA aminoacylation"/>
    <property type="evidence" value="ECO:0007669"/>
    <property type="project" value="UniProtKB-UniRule"/>
</dbReference>
<dbReference type="CDD" id="cd00777">
    <property type="entry name" value="AspRS_core"/>
    <property type="match status" value="1"/>
</dbReference>
<dbReference type="CDD" id="cd04317">
    <property type="entry name" value="EcAspRS_like_N"/>
    <property type="match status" value="1"/>
</dbReference>
<dbReference type="FunFam" id="2.40.50.140:FF:000080">
    <property type="entry name" value="Aspartate--tRNA ligase"/>
    <property type="match status" value="1"/>
</dbReference>
<dbReference type="Gene3D" id="3.30.930.10">
    <property type="entry name" value="Bira Bifunctional Protein, Domain 2"/>
    <property type="match status" value="1"/>
</dbReference>
<dbReference type="Gene3D" id="3.30.1360.30">
    <property type="entry name" value="GAD-like domain"/>
    <property type="match status" value="1"/>
</dbReference>
<dbReference type="Gene3D" id="2.40.50.140">
    <property type="entry name" value="Nucleic acid-binding proteins"/>
    <property type="match status" value="1"/>
</dbReference>
<dbReference type="HAMAP" id="MF_00044">
    <property type="entry name" value="Asp_tRNA_synth_type1"/>
    <property type="match status" value="1"/>
</dbReference>
<dbReference type="InterPro" id="IPR004364">
    <property type="entry name" value="Aa-tRNA-synt_II"/>
</dbReference>
<dbReference type="InterPro" id="IPR006195">
    <property type="entry name" value="aa-tRNA-synth_II"/>
</dbReference>
<dbReference type="InterPro" id="IPR045864">
    <property type="entry name" value="aa-tRNA-synth_II/BPL/LPL"/>
</dbReference>
<dbReference type="InterPro" id="IPR004524">
    <property type="entry name" value="Asp-tRNA-ligase_1"/>
</dbReference>
<dbReference type="InterPro" id="IPR047089">
    <property type="entry name" value="Asp-tRNA-ligase_1_N"/>
</dbReference>
<dbReference type="InterPro" id="IPR002312">
    <property type="entry name" value="Asp/Asn-tRNA-synth_IIb"/>
</dbReference>
<dbReference type="InterPro" id="IPR047090">
    <property type="entry name" value="AspRS_core"/>
</dbReference>
<dbReference type="InterPro" id="IPR004115">
    <property type="entry name" value="GAD-like_sf"/>
</dbReference>
<dbReference type="InterPro" id="IPR029351">
    <property type="entry name" value="GAD_dom"/>
</dbReference>
<dbReference type="InterPro" id="IPR012340">
    <property type="entry name" value="NA-bd_OB-fold"/>
</dbReference>
<dbReference type="InterPro" id="IPR004365">
    <property type="entry name" value="NA-bd_OB_tRNA"/>
</dbReference>
<dbReference type="NCBIfam" id="TIGR00459">
    <property type="entry name" value="aspS_bact"/>
    <property type="match status" value="1"/>
</dbReference>
<dbReference type="NCBIfam" id="NF001750">
    <property type="entry name" value="PRK00476.1"/>
    <property type="match status" value="1"/>
</dbReference>
<dbReference type="PANTHER" id="PTHR22594:SF5">
    <property type="entry name" value="ASPARTATE--TRNA LIGASE, MITOCHONDRIAL"/>
    <property type="match status" value="1"/>
</dbReference>
<dbReference type="PANTHER" id="PTHR22594">
    <property type="entry name" value="ASPARTYL/LYSYL-TRNA SYNTHETASE"/>
    <property type="match status" value="1"/>
</dbReference>
<dbReference type="Pfam" id="PF02938">
    <property type="entry name" value="GAD"/>
    <property type="match status" value="1"/>
</dbReference>
<dbReference type="Pfam" id="PF00152">
    <property type="entry name" value="tRNA-synt_2"/>
    <property type="match status" value="1"/>
</dbReference>
<dbReference type="Pfam" id="PF01336">
    <property type="entry name" value="tRNA_anti-codon"/>
    <property type="match status" value="1"/>
</dbReference>
<dbReference type="PRINTS" id="PR01042">
    <property type="entry name" value="TRNASYNTHASP"/>
</dbReference>
<dbReference type="SUPFAM" id="SSF55681">
    <property type="entry name" value="Class II aaRS and biotin synthetases"/>
    <property type="match status" value="1"/>
</dbReference>
<dbReference type="SUPFAM" id="SSF55261">
    <property type="entry name" value="GAD domain-like"/>
    <property type="match status" value="1"/>
</dbReference>
<dbReference type="SUPFAM" id="SSF50249">
    <property type="entry name" value="Nucleic acid-binding proteins"/>
    <property type="match status" value="1"/>
</dbReference>
<dbReference type="PROSITE" id="PS50862">
    <property type="entry name" value="AA_TRNA_LIGASE_II"/>
    <property type="match status" value="1"/>
</dbReference>
<accession>Q0HUY7</accession>
<protein>
    <recommendedName>
        <fullName evidence="1">Aspartate--tRNA ligase</fullName>
        <ecNumber evidence="1">6.1.1.12</ecNumber>
    </recommendedName>
    <alternativeName>
        <fullName evidence="1">Aspartyl-tRNA synthetase</fullName>
        <shortName evidence="1">AspRS</shortName>
    </alternativeName>
</protein>
<proteinExistence type="inferred from homology"/>
<reference key="1">
    <citation type="submission" date="2006-08" db="EMBL/GenBank/DDBJ databases">
        <title>Complete sequence of chromosome 1 of Shewanella sp. MR-7.</title>
        <authorList>
            <person name="Copeland A."/>
            <person name="Lucas S."/>
            <person name="Lapidus A."/>
            <person name="Barry K."/>
            <person name="Detter J.C."/>
            <person name="Glavina del Rio T."/>
            <person name="Hammon N."/>
            <person name="Israni S."/>
            <person name="Dalin E."/>
            <person name="Tice H."/>
            <person name="Pitluck S."/>
            <person name="Kiss H."/>
            <person name="Brettin T."/>
            <person name="Bruce D."/>
            <person name="Han C."/>
            <person name="Tapia R."/>
            <person name="Gilna P."/>
            <person name="Schmutz J."/>
            <person name="Larimer F."/>
            <person name="Land M."/>
            <person name="Hauser L."/>
            <person name="Kyrpides N."/>
            <person name="Mikhailova N."/>
            <person name="Nealson K."/>
            <person name="Konstantinidis K."/>
            <person name="Klappenbach J."/>
            <person name="Tiedje J."/>
            <person name="Richardson P."/>
        </authorList>
    </citation>
    <scope>NUCLEOTIDE SEQUENCE [LARGE SCALE GENOMIC DNA]</scope>
    <source>
        <strain>MR-7</strain>
    </source>
</reference>
<name>SYD_SHESR</name>
<gene>
    <name evidence="1" type="primary">aspS</name>
    <name type="ordered locus">Shewmr7_2080</name>
</gene>
<feature type="chain" id="PRO_1000006761" description="Aspartate--tRNA ligase">
    <location>
        <begin position="1"/>
        <end position="591"/>
    </location>
</feature>
<feature type="region of interest" description="Aspartate" evidence="1">
    <location>
        <begin position="197"/>
        <end position="200"/>
    </location>
</feature>
<feature type="binding site" evidence="1">
    <location>
        <position position="173"/>
    </location>
    <ligand>
        <name>L-aspartate</name>
        <dbReference type="ChEBI" id="CHEBI:29991"/>
    </ligand>
</feature>
<feature type="binding site" evidence="1">
    <location>
        <begin position="219"/>
        <end position="221"/>
    </location>
    <ligand>
        <name>ATP</name>
        <dbReference type="ChEBI" id="CHEBI:30616"/>
    </ligand>
</feature>
<feature type="binding site" evidence="1">
    <location>
        <position position="219"/>
    </location>
    <ligand>
        <name>L-aspartate</name>
        <dbReference type="ChEBI" id="CHEBI:29991"/>
    </ligand>
</feature>
<feature type="binding site" evidence="1">
    <location>
        <position position="228"/>
    </location>
    <ligand>
        <name>ATP</name>
        <dbReference type="ChEBI" id="CHEBI:30616"/>
    </ligand>
</feature>
<feature type="binding site" evidence="1">
    <location>
        <position position="448"/>
    </location>
    <ligand>
        <name>L-aspartate</name>
        <dbReference type="ChEBI" id="CHEBI:29991"/>
    </ligand>
</feature>
<feature type="binding site" evidence="1">
    <location>
        <position position="482"/>
    </location>
    <ligand>
        <name>ATP</name>
        <dbReference type="ChEBI" id="CHEBI:30616"/>
    </ligand>
</feature>
<feature type="binding site" evidence="1">
    <location>
        <position position="489"/>
    </location>
    <ligand>
        <name>L-aspartate</name>
        <dbReference type="ChEBI" id="CHEBI:29991"/>
    </ligand>
</feature>
<feature type="binding site" evidence="1">
    <location>
        <begin position="534"/>
        <end position="537"/>
    </location>
    <ligand>
        <name>ATP</name>
        <dbReference type="ChEBI" id="CHEBI:30616"/>
    </ligand>
</feature>
<sequence>MRSHYCGDVNKSHVGQEVTLVGWVNRSRDLGGVVFLDLRDREGLVQVVYDPDLPEVFNVASTLRAEFCVQVKGVVRARPDSQVNAQMKTGEIEVLGKELTIINSSEPLPLSLDNYQNNSEEQRLKYRYLDLRRPEMAQRLMFRAKVTSAVRRFLDSNGFLDIETPILTKATPEGARDYLVPSRTYKGQFFALPQSPQLFKQLLMMSGFDRYYQIVKCFRDEDLRADRQPEFTQIDIETSFMTSEQVMAKTEEMMRGLFLEMLNVDLGEFPRMTYNEAMRRFGSDKPDLRNPLELVDVADLLKNVEFAVFSGPANDEEGRVAALRIPGGASLSRKQIDDYTKFVGIYGAKGLAWMKLNDLTQGLEGIQSPVLKFLNEGIVNEIISRTGAQTGDIILFGADNAIVVAESMGALRLKAGEDFNLLEGQWRPLWVVDFPMFEKINGSFHAVHHPFTAPRGVTPQELEANPANRVSDAYDMVLNGCELGGGSVRIHNQEMQSAVFRILGITDEEAKEKFGFLLEALRYGTPPHAGLAFGLDRIIMLMTGASSIRDVMAFPKTTTAACPLTNAPGFANPQQLAELGISVVKAAKTED</sequence>
<organism>
    <name type="scientific">Shewanella sp. (strain MR-7)</name>
    <dbReference type="NCBI Taxonomy" id="60481"/>
    <lineage>
        <taxon>Bacteria</taxon>
        <taxon>Pseudomonadati</taxon>
        <taxon>Pseudomonadota</taxon>
        <taxon>Gammaproteobacteria</taxon>
        <taxon>Alteromonadales</taxon>
        <taxon>Shewanellaceae</taxon>
        <taxon>Shewanella</taxon>
    </lineage>
</organism>